<evidence type="ECO:0000250" key="1">
    <source>
        <dbReference type="UniProtKB" id="P03558"/>
    </source>
</evidence>
<evidence type="ECO:0000256" key="2">
    <source>
        <dbReference type="SAM" id="MobiDB-lite"/>
    </source>
</evidence>
<evidence type="ECO:0000305" key="3"/>
<organism>
    <name type="scientific">Cauliflower mosaic virus (strain NY8153)</name>
    <name type="common">CaMV</name>
    <dbReference type="NCBI Taxonomy" id="31557"/>
    <lineage>
        <taxon>Viruses</taxon>
        <taxon>Riboviria</taxon>
        <taxon>Pararnavirae</taxon>
        <taxon>Artverviricota</taxon>
        <taxon>Revtraviricetes</taxon>
        <taxon>Ortervirales</taxon>
        <taxon>Caulimoviridae</taxon>
        <taxon>Caulimovirus</taxon>
        <taxon>Caulimovirus tessellobrassicae</taxon>
    </lineage>
</organism>
<sequence>MENIEKLLMQEKILMLELDLVRAKISLARANGSSQQGDLPLHRETPEKEEAVHSALATFTPTQVKAIPEQTAPGKESTNPLMASILPKDMNPVQTGIRLAVPGDFLRPHQGIPIPQKSELSSTVAPLRAESGIQHPHINYYVVYNGPHAGIYDDWGCTKAATNGVPGVAHKKFATITEARAAADAYTTSTQTDRLNFIPKGEAQLKPKSFAEALTSPPKQKAHWLTLGTKRPSSDPAPKEISFAPEITMDDFLYLYHLGRKFDGEGDDTIFTTDNEKISLFNFRKNADPQMVREAYAAGLIKTIYPSNNLQEIKYLPKKVKDAVKRFRTNCIKNTEKDIFLKIRSTIPVWTIQGLVHKPRQVIEIGVSKKVVPTESKAMESKIQIEDLTELAVKTGGQFIQSLLRLNDKKKIFVNMVEHDTLVYSKNIKDTVSEDQRAIETFQQRVISGNLLGFHCPSICHFMERTVEKEGGSYKVHHCDKGKAIVQDASADSGPKDGPPPTRSIVEKEDVPTTSSKQVD</sequence>
<reference key="1">
    <citation type="journal article" date="1992" name="Plant Physiol.">
        <title>Nucleotide sequence of cauliflower mosaic virus isolate NY8153.</title>
        <authorList>
            <person name="Chenault K.D."/>
            <person name="Steffens D.L."/>
            <person name="Melcher U.K."/>
        </authorList>
    </citation>
    <scope>NUCLEOTIDE SEQUENCE [GENOMIC DNA]</scope>
</reference>
<keyword id="KW-1035">Host cytoplasm</keyword>
<keyword id="KW-0810">Translation regulation</keyword>
<gene>
    <name type="ORF">ORF VI</name>
</gene>
<proteinExistence type="inferred from homology"/>
<protein>
    <recommendedName>
        <fullName>Transactivator/viroplasmin protein</fullName>
        <shortName>Tav</shortName>
    </recommendedName>
    <alternativeName>
        <fullName>Inclusion body matrix protein</fullName>
    </alternativeName>
</protein>
<name>IBMP_CAMVN</name>
<accession>Q00957</accession>
<organismHost>
    <name type="scientific">Arabidopsis thaliana</name>
    <name type="common">Mouse-ear cress</name>
    <dbReference type="NCBI Taxonomy" id="3702"/>
</organismHost>
<organismHost>
    <name type="scientific">Brassica</name>
    <dbReference type="NCBI Taxonomy" id="3705"/>
</organismHost>
<organismHost>
    <name type="scientific">Raphanus</name>
    <dbReference type="NCBI Taxonomy" id="3725"/>
</organismHost>
<feature type="chain" id="PRO_0000222043" description="Transactivator/viroplasmin protein">
    <location>
        <begin position="1"/>
        <end position="520"/>
    </location>
</feature>
<feature type="region of interest" description="Disordered" evidence="2">
    <location>
        <begin position="486"/>
        <end position="520"/>
    </location>
</feature>
<comment type="function">
    <text evidence="1">Enhances the ribosomal termination-reinitiation event leading to the translation of major open reading frames on the polycistronic viral RNAs.</text>
</comment>
<comment type="subcellular location">
    <subcellularLocation>
        <location>Host cytoplasm</location>
    </subcellularLocation>
    <text>Found in cytoplasmic occlusion bodies.</text>
</comment>
<comment type="miscellaneous">
    <text>The inclusion bodies are the site of viral DNA synthesis, virion assembly and accumulation in the infected cell.</text>
</comment>
<comment type="similarity">
    <text evidence="3">Belongs to the caulimoviridae viroplasmin family.</text>
</comment>
<dbReference type="EMBL" id="M90541">
    <property type="protein sequence ID" value="AAA46359.1"/>
    <property type="molecule type" value="Genomic_DNA"/>
</dbReference>
<dbReference type="SMR" id="Q00957"/>
<dbReference type="Proteomes" id="UP000008441">
    <property type="component" value="Genome"/>
</dbReference>
<dbReference type="GO" id="GO:0030430">
    <property type="term" value="C:host cell cytoplasm"/>
    <property type="evidence" value="ECO:0007669"/>
    <property type="project" value="UniProtKB-SubCell"/>
</dbReference>
<dbReference type="GO" id="GO:0006417">
    <property type="term" value="P:regulation of translation"/>
    <property type="evidence" value="ECO:0007669"/>
    <property type="project" value="UniProtKB-KW"/>
</dbReference>
<dbReference type="FunFam" id="3.40.970.10:FF:000003">
    <property type="entry name" value="Transactivator/viroplasmin protein"/>
    <property type="match status" value="1"/>
</dbReference>
<dbReference type="Gene3D" id="3.40.970.10">
    <property type="entry name" value="Ribonuclease H1, N-terminal domain"/>
    <property type="match status" value="1"/>
</dbReference>
<dbReference type="InterPro" id="IPR009027">
    <property type="entry name" value="Ribosomal_bL9/RNase_H1_N"/>
</dbReference>
<dbReference type="InterPro" id="IPR011320">
    <property type="entry name" value="RNase_H1_N"/>
</dbReference>
<dbReference type="InterPro" id="IPR037056">
    <property type="entry name" value="RNase_H1_N_sf"/>
</dbReference>
<dbReference type="Pfam" id="PF01693">
    <property type="entry name" value="Cauli_VI"/>
    <property type="match status" value="1"/>
</dbReference>
<dbReference type="SUPFAM" id="SSF55658">
    <property type="entry name" value="L9 N-domain-like"/>
    <property type="match status" value="1"/>
</dbReference>